<proteinExistence type="inferred from homology"/>
<organism>
    <name type="scientific">Streptococcus mutans serotype c (strain ATCC 700610 / UA159)</name>
    <dbReference type="NCBI Taxonomy" id="210007"/>
    <lineage>
        <taxon>Bacteria</taxon>
        <taxon>Bacillati</taxon>
        <taxon>Bacillota</taxon>
        <taxon>Bacilli</taxon>
        <taxon>Lactobacillales</taxon>
        <taxon>Streptococcaceae</taxon>
        <taxon>Streptococcus</taxon>
    </lineage>
</organism>
<name>AROE_STRMU</name>
<keyword id="KW-0028">Amino-acid biosynthesis</keyword>
<keyword id="KW-0057">Aromatic amino acid biosynthesis</keyword>
<keyword id="KW-0521">NADP</keyword>
<keyword id="KW-0560">Oxidoreductase</keyword>
<keyword id="KW-1185">Reference proteome</keyword>
<feature type="chain" id="PRO_1000021344" description="Shikimate dehydrogenase (NADP(+))">
    <location>
        <begin position="1"/>
        <end position="289"/>
    </location>
</feature>
<feature type="active site" description="Proton acceptor" evidence="1">
    <location>
        <position position="71"/>
    </location>
</feature>
<feature type="binding site" evidence="1">
    <location>
        <begin position="20"/>
        <end position="22"/>
    </location>
    <ligand>
        <name>shikimate</name>
        <dbReference type="ChEBI" id="CHEBI:36208"/>
    </ligand>
</feature>
<feature type="binding site" evidence="1">
    <location>
        <position position="67"/>
    </location>
    <ligand>
        <name>shikimate</name>
        <dbReference type="ChEBI" id="CHEBI:36208"/>
    </ligand>
</feature>
<feature type="binding site" evidence="1">
    <location>
        <position position="92"/>
    </location>
    <ligand>
        <name>shikimate</name>
        <dbReference type="ChEBI" id="CHEBI:36208"/>
    </ligand>
</feature>
<feature type="binding site" evidence="1">
    <location>
        <position position="107"/>
    </location>
    <ligand>
        <name>shikimate</name>
        <dbReference type="ChEBI" id="CHEBI:36208"/>
    </ligand>
</feature>
<feature type="binding site" evidence="1">
    <location>
        <begin position="132"/>
        <end position="136"/>
    </location>
    <ligand>
        <name>NADP(+)</name>
        <dbReference type="ChEBI" id="CHEBI:58349"/>
    </ligand>
</feature>
<feature type="binding site" evidence="1">
    <location>
        <position position="230"/>
    </location>
    <ligand>
        <name>NADP(+)</name>
        <dbReference type="ChEBI" id="CHEBI:58349"/>
    </ligand>
</feature>
<feature type="binding site" evidence="1">
    <location>
        <position position="232"/>
    </location>
    <ligand>
        <name>shikimate</name>
        <dbReference type="ChEBI" id="CHEBI:36208"/>
    </ligand>
</feature>
<feature type="binding site" evidence="1">
    <location>
        <position position="253"/>
    </location>
    <ligand>
        <name>NADP(+)</name>
        <dbReference type="ChEBI" id="CHEBI:58349"/>
    </ligand>
</feature>
<evidence type="ECO:0000255" key="1">
    <source>
        <dbReference type="HAMAP-Rule" id="MF_00222"/>
    </source>
</evidence>
<accession>Q8DUW3</accession>
<dbReference type="EC" id="1.1.1.25" evidence="1"/>
<dbReference type="EMBL" id="AE014133">
    <property type="protein sequence ID" value="AAN58498.1"/>
    <property type="molecule type" value="Genomic_DNA"/>
</dbReference>
<dbReference type="RefSeq" id="NP_721192.1">
    <property type="nucleotide sequence ID" value="NC_004350.2"/>
</dbReference>
<dbReference type="RefSeq" id="WP_002261932.1">
    <property type="nucleotide sequence ID" value="NC_004350.2"/>
</dbReference>
<dbReference type="SMR" id="Q8DUW3"/>
<dbReference type="STRING" id="210007.SMU_778"/>
<dbReference type="KEGG" id="smu:SMU_778"/>
<dbReference type="PATRIC" id="fig|210007.7.peg.689"/>
<dbReference type="eggNOG" id="COG0169">
    <property type="taxonomic scope" value="Bacteria"/>
</dbReference>
<dbReference type="HOGENOM" id="CLU_044063_4_4_9"/>
<dbReference type="OrthoDB" id="9792692at2"/>
<dbReference type="PhylomeDB" id="Q8DUW3"/>
<dbReference type="UniPathway" id="UPA00053">
    <property type="reaction ID" value="UER00087"/>
</dbReference>
<dbReference type="Proteomes" id="UP000002512">
    <property type="component" value="Chromosome"/>
</dbReference>
<dbReference type="GO" id="GO:0050661">
    <property type="term" value="F:NADP binding"/>
    <property type="evidence" value="ECO:0007669"/>
    <property type="project" value="InterPro"/>
</dbReference>
<dbReference type="GO" id="GO:0004764">
    <property type="term" value="F:shikimate 3-dehydrogenase (NADP+) activity"/>
    <property type="evidence" value="ECO:0007669"/>
    <property type="project" value="UniProtKB-UniRule"/>
</dbReference>
<dbReference type="GO" id="GO:0008652">
    <property type="term" value="P:amino acid biosynthetic process"/>
    <property type="evidence" value="ECO:0007669"/>
    <property type="project" value="UniProtKB-KW"/>
</dbReference>
<dbReference type="GO" id="GO:0009073">
    <property type="term" value="P:aromatic amino acid family biosynthetic process"/>
    <property type="evidence" value="ECO:0007669"/>
    <property type="project" value="UniProtKB-KW"/>
</dbReference>
<dbReference type="GO" id="GO:0009423">
    <property type="term" value="P:chorismate biosynthetic process"/>
    <property type="evidence" value="ECO:0007669"/>
    <property type="project" value="UniProtKB-UniRule"/>
</dbReference>
<dbReference type="GO" id="GO:0019632">
    <property type="term" value="P:shikimate metabolic process"/>
    <property type="evidence" value="ECO:0007669"/>
    <property type="project" value="InterPro"/>
</dbReference>
<dbReference type="CDD" id="cd01065">
    <property type="entry name" value="NAD_bind_Shikimate_DH"/>
    <property type="match status" value="1"/>
</dbReference>
<dbReference type="FunFam" id="3.40.50.10860:FF:000004">
    <property type="entry name" value="Quinate/shikimate dehydrogenase"/>
    <property type="match status" value="1"/>
</dbReference>
<dbReference type="Gene3D" id="3.40.50.10860">
    <property type="entry name" value="Leucine Dehydrogenase, chain A, domain 1"/>
    <property type="match status" value="1"/>
</dbReference>
<dbReference type="Gene3D" id="3.40.50.720">
    <property type="entry name" value="NAD(P)-binding Rossmann-like Domain"/>
    <property type="match status" value="1"/>
</dbReference>
<dbReference type="HAMAP" id="MF_00222">
    <property type="entry name" value="Shikimate_DH_AroE"/>
    <property type="match status" value="1"/>
</dbReference>
<dbReference type="InterPro" id="IPR046346">
    <property type="entry name" value="Aminoacid_DH-like_N_sf"/>
</dbReference>
<dbReference type="InterPro" id="IPR036291">
    <property type="entry name" value="NAD(P)-bd_dom_sf"/>
</dbReference>
<dbReference type="InterPro" id="IPR041121">
    <property type="entry name" value="SDH_C"/>
</dbReference>
<dbReference type="InterPro" id="IPR011342">
    <property type="entry name" value="Shikimate_DH"/>
</dbReference>
<dbReference type="InterPro" id="IPR013708">
    <property type="entry name" value="Shikimate_DH-bd_N"/>
</dbReference>
<dbReference type="InterPro" id="IPR022893">
    <property type="entry name" value="Shikimate_DH_fam"/>
</dbReference>
<dbReference type="NCBIfam" id="TIGR00507">
    <property type="entry name" value="aroE"/>
    <property type="match status" value="1"/>
</dbReference>
<dbReference type="NCBIfam" id="NF001315">
    <property type="entry name" value="PRK00258.2-4"/>
    <property type="match status" value="1"/>
</dbReference>
<dbReference type="PANTHER" id="PTHR21089:SF1">
    <property type="entry name" value="BIFUNCTIONAL 3-DEHYDROQUINATE DEHYDRATASE_SHIKIMATE DEHYDROGENASE, CHLOROPLASTIC"/>
    <property type="match status" value="1"/>
</dbReference>
<dbReference type="PANTHER" id="PTHR21089">
    <property type="entry name" value="SHIKIMATE DEHYDROGENASE"/>
    <property type="match status" value="1"/>
</dbReference>
<dbReference type="Pfam" id="PF18317">
    <property type="entry name" value="SDH_C"/>
    <property type="match status" value="1"/>
</dbReference>
<dbReference type="Pfam" id="PF08501">
    <property type="entry name" value="Shikimate_dh_N"/>
    <property type="match status" value="1"/>
</dbReference>
<dbReference type="SUPFAM" id="SSF53223">
    <property type="entry name" value="Aminoacid dehydrogenase-like, N-terminal domain"/>
    <property type="match status" value="1"/>
</dbReference>
<dbReference type="SUPFAM" id="SSF51735">
    <property type="entry name" value="NAD(P)-binding Rossmann-fold domains"/>
    <property type="match status" value="1"/>
</dbReference>
<comment type="function">
    <text evidence="1">Involved in the biosynthesis of the chorismate, which leads to the biosynthesis of aromatic amino acids. Catalyzes the reversible NADPH linked reduction of 3-dehydroshikimate (DHSA) to yield shikimate (SA).</text>
</comment>
<comment type="catalytic activity">
    <reaction evidence="1">
        <text>shikimate + NADP(+) = 3-dehydroshikimate + NADPH + H(+)</text>
        <dbReference type="Rhea" id="RHEA:17737"/>
        <dbReference type="ChEBI" id="CHEBI:15378"/>
        <dbReference type="ChEBI" id="CHEBI:16630"/>
        <dbReference type="ChEBI" id="CHEBI:36208"/>
        <dbReference type="ChEBI" id="CHEBI:57783"/>
        <dbReference type="ChEBI" id="CHEBI:58349"/>
        <dbReference type="EC" id="1.1.1.25"/>
    </reaction>
</comment>
<comment type="pathway">
    <text evidence="1">Metabolic intermediate biosynthesis; chorismate biosynthesis; chorismate from D-erythrose 4-phosphate and phosphoenolpyruvate: step 4/7.</text>
</comment>
<comment type="subunit">
    <text evidence="1">Homodimer.</text>
</comment>
<comment type="similarity">
    <text evidence="1">Belongs to the shikimate dehydrogenase family.</text>
</comment>
<gene>
    <name evidence="1" type="primary">aroE</name>
    <name type="ordered locus">SMU_778</name>
</gene>
<protein>
    <recommendedName>
        <fullName evidence="1">Shikimate dehydrogenase (NADP(+))</fullName>
        <shortName evidence="1">SDH</shortName>
        <ecNumber evidence="1">1.1.1.25</ecNumber>
    </recommendedName>
</protein>
<sequence length="289" mass="31811">MQIDGYTRLAAVVATPIKHSISPFIHNYAFEKTGINGVYVAWDIPESELQVTLKNIMRYDMFGINISMPYKQAVIPYLDEVTKAADLIGAVNTIVNRDGRLIGYNTDGFGFFKSLGTFADFDVADKVITILGGGGAATAIIAQAAINGAKKINIFNQTAFLEETKEKAKQISSKTGAAIEVFPVEDLNMIQKKVLVSDLFVNATNVGMDGKSMIINDSFEFPPNLMVADVIYQPFETPFLRLVRSRGLKAVNGLGMLLFQAAAAFELWTGKEMPSQEIWQALEKKYKSK</sequence>
<reference key="1">
    <citation type="journal article" date="2002" name="Proc. Natl. Acad. Sci. U.S.A.">
        <title>Genome sequence of Streptococcus mutans UA159, a cariogenic dental pathogen.</title>
        <authorList>
            <person name="Ajdic D.J."/>
            <person name="McShan W.M."/>
            <person name="McLaughlin R.E."/>
            <person name="Savic G."/>
            <person name="Chang J."/>
            <person name="Carson M.B."/>
            <person name="Primeaux C."/>
            <person name="Tian R."/>
            <person name="Kenton S."/>
            <person name="Jia H.G."/>
            <person name="Lin S.P."/>
            <person name="Qian Y."/>
            <person name="Li S."/>
            <person name="Zhu H."/>
            <person name="Najar F.Z."/>
            <person name="Lai H."/>
            <person name="White J."/>
            <person name="Roe B.A."/>
            <person name="Ferretti J.J."/>
        </authorList>
    </citation>
    <scope>NUCLEOTIDE SEQUENCE [LARGE SCALE GENOMIC DNA]</scope>
    <source>
        <strain>ATCC 700610 / UA159</strain>
    </source>
</reference>